<protein>
    <recommendedName>
        <fullName evidence="1">Guanosine-5'-triphosphate,3'-diphosphate pyrophosphatase</fullName>
        <ecNumber evidence="1">3.6.1.40</ecNumber>
    </recommendedName>
    <alternativeName>
        <fullName evidence="1">Guanosine pentaphosphate phosphohydrolase</fullName>
    </alternativeName>
    <alternativeName>
        <fullName evidence="1">pppGpp-5'-phosphohydrolase</fullName>
    </alternativeName>
</protein>
<keyword id="KW-0378">Hydrolase</keyword>
<evidence type="ECO:0000255" key="1">
    <source>
        <dbReference type="HAMAP-Rule" id="MF_01550"/>
    </source>
</evidence>
<accession>A4STJ8</accession>
<dbReference type="EC" id="3.6.1.40" evidence="1"/>
<dbReference type="EMBL" id="CP000644">
    <property type="protein sequence ID" value="ABO92220.1"/>
    <property type="molecule type" value="Genomic_DNA"/>
</dbReference>
<dbReference type="RefSeq" id="WP_005320675.1">
    <property type="nucleotide sequence ID" value="NC_009348.1"/>
</dbReference>
<dbReference type="SMR" id="A4STJ8"/>
<dbReference type="STRING" id="29491.GCA_000820065_02801"/>
<dbReference type="KEGG" id="asa:ASA_4296"/>
<dbReference type="PATRIC" id="fig|382245.13.peg.4261"/>
<dbReference type="eggNOG" id="COG0248">
    <property type="taxonomic scope" value="Bacteria"/>
</dbReference>
<dbReference type="HOGENOM" id="CLU_025908_4_0_6"/>
<dbReference type="UniPathway" id="UPA00908">
    <property type="reaction ID" value="UER00885"/>
</dbReference>
<dbReference type="Proteomes" id="UP000000225">
    <property type="component" value="Chromosome"/>
</dbReference>
<dbReference type="GO" id="GO:0008894">
    <property type="term" value="F:guanosine-5'-triphosphate,3'-diphosphate diphosphatase activity"/>
    <property type="evidence" value="ECO:0007669"/>
    <property type="project" value="UniProtKB-UniRule"/>
</dbReference>
<dbReference type="GO" id="GO:0015974">
    <property type="term" value="P:guanosine pentaphosphate catabolic process"/>
    <property type="evidence" value="ECO:0007669"/>
    <property type="project" value="InterPro"/>
</dbReference>
<dbReference type="GO" id="GO:0015970">
    <property type="term" value="P:guanosine tetraphosphate biosynthetic process"/>
    <property type="evidence" value="ECO:0007669"/>
    <property type="project" value="UniProtKB-UniRule"/>
</dbReference>
<dbReference type="GO" id="GO:0015949">
    <property type="term" value="P:nucleobase-containing small molecule interconversion"/>
    <property type="evidence" value="ECO:0007669"/>
    <property type="project" value="TreeGrafter"/>
</dbReference>
<dbReference type="FunFam" id="3.30.420.150:FF:000001">
    <property type="entry name" value="Guanosine-5'-triphosphate,3'-diphosphate pyrophosphatase"/>
    <property type="match status" value="1"/>
</dbReference>
<dbReference type="FunFam" id="3.30.420.40:FF:000023">
    <property type="entry name" value="Guanosine-5'-triphosphate,3'-diphosphate pyrophosphatase"/>
    <property type="match status" value="1"/>
</dbReference>
<dbReference type="Gene3D" id="3.30.420.40">
    <property type="match status" value="1"/>
</dbReference>
<dbReference type="Gene3D" id="3.30.420.150">
    <property type="entry name" value="Exopolyphosphatase. Domain 2"/>
    <property type="match status" value="1"/>
</dbReference>
<dbReference type="Gene3D" id="1.10.3210.10">
    <property type="entry name" value="Hypothetical protein af1432"/>
    <property type="match status" value="1"/>
</dbReference>
<dbReference type="HAMAP" id="MF_01550">
    <property type="entry name" value="GppA"/>
    <property type="match status" value="1"/>
</dbReference>
<dbReference type="InterPro" id="IPR043129">
    <property type="entry name" value="ATPase_NBD"/>
</dbReference>
<dbReference type="InterPro" id="IPR050273">
    <property type="entry name" value="GppA/Ppx_hydrolase"/>
</dbReference>
<dbReference type="InterPro" id="IPR023709">
    <property type="entry name" value="Guo-5TP_3DP_PyrP"/>
</dbReference>
<dbReference type="InterPro" id="IPR048950">
    <property type="entry name" value="Ppx_GppA_C"/>
</dbReference>
<dbReference type="InterPro" id="IPR003695">
    <property type="entry name" value="Ppx_GppA_N"/>
</dbReference>
<dbReference type="InterPro" id="IPR030673">
    <property type="entry name" value="PyroPPase_GppA_Ppx"/>
</dbReference>
<dbReference type="NCBIfam" id="NF008260">
    <property type="entry name" value="PRK11031.1"/>
    <property type="match status" value="1"/>
</dbReference>
<dbReference type="PANTHER" id="PTHR30005">
    <property type="entry name" value="EXOPOLYPHOSPHATASE"/>
    <property type="match status" value="1"/>
</dbReference>
<dbReference type="PANTHER" id="PTHR30005:SF0">
    <property type="entry name" value="RETROGRADE REGULATION PROTEIN 2"/>
    <property type="match status" value="1"/>
</dbReference>
<dbReference type="Pfam" id="PF02541">
    <property type="entry name" value="Ppx-GppA"/>
    <property type="match status" value="1"/>
</dbReference>
<dbReference type="Pfam" id="PF21447">
    <property type="entry name" value="Ppx-GppA_III"/>
    <property type="match status" value="1"/>
</dbReference>
<dbReference type="PIRSF" id="PIRSF001267">
    <property type="entry name" value="Pyrophosphatase_GppA_Ppx"/>
    <property type="match status" value="1"/>
</dbReference>
<dbReference type="SUPFAM" id="SSF53067">
    <property type="entry name" value="Actin-like ATPase domain"/>
    <property type="match status" value="2"/>
</dbReference>
<dbReference type="SUPFAM" id="SSF109604">
    <property type="entry name" value="HD-domain/PDEase-like"/>
    <property type="match status" value="1"/>
</dbReference>
<sequence>MHNSPLYAAIDLGSNSFHMLVVREVAGALRTVTKVKRKVRLAAGLDPEFRLSRAAMERGWDCLRLFSEQLQDIPADNIRVVGTATLRLATNVDEFLSEAERVLNHSIEIISGEEEAKTIYEGVSWTSAGEGNRLVIDIGGASTELVIGEHSEAKLLNSLHMGCVTWLNNHFGDGELSEARFAQAIAAAKAVLEKVAEDYCVLGWRTCVGASGTVQALQEIMLAQGKSERVTLPKLQELMGQAIACGRLDRLQLEGLAAERLTVFPSGLAILIAIFETLNIESMTLAGGALREGLIYGLLGNNHDCDARDRTADSLISCYQLDKEHAERVRDTAIEAFNQLQPAWRLSKRYGRPILRYAALLHEIGLCIEYKKAPQHAAYIIDNIDMPGFTPAQKKLLSALLFNQRDEFKLETLEKQGAVTGRQAIRLARILRISLILCMRRTQGTVPNFTLQAEEEALTLTLPKGWMDEHYLRASELRLEVERQQKMGWPTRLLEA</sequence>
<comment type="function">
    <text evidence="1">Catalyzes the conversion of pppGpp to ppGpp. Guanosine pentaphosphate (pppGpp) is a cytoplasmic signaling molecule which together with ppGpp controls the 'stringent response', an adaptive process that allows bacteria to respond to amino acid starvation, resulting in the coordinated regulation of numerous cellular activities.</text>
</comment>
<comment type="catalytic activity">
    <reaction evidence="1">
        <text>guanosine 3'-diphosphate 5'-triphosphate + H2O = guanosine 3',5'-bis(diphosphate) + phosphate + H(+)</text>
        <dbReference type="Rhea" id="RHEA:13073"/>
        <dbReference type="ChEBI" id="CHEBI:15377"/>
        <dbReference type="ChEBI" id="CHEBI:15378"/>
        <dbReference type="ChEBI" id="CHEBI:43474"/>
        <dbReference type="ChEBI" id="CHEBI:77828"/>
        <dbReference type="ChEBI" id="CHEBI:142410"/>
        <dbReference type="EC" id="3.6.1.40"/>
    </reaction>
</comment>
<comment type="pathway">
    <text evidence="1">Purine metabolism; ppGpp biosynthesis; ppGpp from GTP: step 2/2.</text>
</comment>
<comment type="similarity">
    <text evidence="1">Belongs to the GppA/Ppx family. GppA subfamily.</text>
</comment>
<organism>
    <name type="scientific">Aeromonas salmonicida (strain A449)</name>
    <dbReference type="NCBI Taxonomy" id="382245"/>
    <lineage>
        <taxon>Bacteria</taxon>
        <taxon>Pseudomonadati</taxon>
        <taxon>Pseudomonadota</taxon>
        <taxon>Gammaproteobacteria</taxon>
        <taxon>Aeromonadales</taxon>
        <taxon>Aeromonadaceae</taxon>
        <taxon>Aeromonas</taxon>
    </lineage>
</organism>
<feature type="chain" id="PRO_0000314492" description="Guanosine-5'-triphosphate,3'-diphosphate pyrophosphatase">
    <location>
        <begin position="1"/>
        <end position="496"/>
    </location>
</feature>
<gene>
    <name evidence="1" type="primary">gppA</name>
    <name type="ordered locus">ASA_4296</name>
</gene>
<reference key="1">
    <citation type="journal article" date="2008" name="BMC Genomics">
        <title>The genome of Aeromonas salmonicida subsp. salmonicida A449: insights into the evolution of a fish pathogen.</title>
        <authorList>
            <person name="Reith M.E."/>
            <person name="Singh R.K."/>
            <person name="Curtis B."/>
            <person name="Boyd J.M."/>
            <person name="Bouevitch A."/>
            <person name="Kimball J."/>
            <person name="Munholland J."/>
            <person name="Murphy C."/>
            <person name="Sarty D."/>
            <person name="Williams J."/>
            <person name="Nash J.H."/>
            <person name="Johnson S.C."/>
            <person name="Brown L.L."/>
        </authorList>
    </citation>
    <scope>NUCLEOTIDE SEQUENCE [LARGE SCALE GENOMIC DNA]</scope>
    <source>
        <strain>A449</strain>
    </source>
</reference>
<name>GPPA_AERS4</name>
<proteinExistence type="inferred from homology"/>